<dbReference type="EC" id="3.1.-.-" evidence="2"/>
<dbReference type="EMBL" id="CP000493">
    <property type="protein sequence ID" value="ABM81191.1"/>
    <property type="molecule type" value="Genomic_DNA"/>
</dbReference>
<dbReference type="RefSeq" id="WP_011822509.1">
    <property type="nucleotide sequence ID" value="NC_008818.1"/>
</dbReference>
<dbReference type="SMR" id="A2BMI0"/>
<dbReference type="STRING" id="415426.Hbut_1366"/>
<dbReference type="EnsemblBacteria" id="ABM81191">
    <property type="protein sequence ID" value="ABM81191"/>
    <property type="gene ID" value="Hbut_1366"/>
</dbReference>
<dbReference type="GeneID" id="4782618"/>
<dbReference type="KEGG" id="hbu:Hbut_1366"/>
<dbReference type="eggNOG" id="arCOG04050">
    <property type="taxonomic scope" value="Archaea"/>
</dbReference>
<dbReference type="HOGENOM" id="CLU_032444_0_0_2"/>
<dbReference type="OrthoDB" id="9593at2157"/>
<dbReference type="Proteomes" id="UP000002593">
    <property type="component" value="Chromosome"/>
</dbReference>
<dbReference type="GO" id="GO:0008409">
    <property type="term" value="F:5'-3' exonuclease activity"/>
    <property type="evidence" value="ECO:0007669"/>
    <property type="project" value="UniProtKB-UniRule"/>
</dbReference>
<dbReference type="GO" id="GO:0017108">
    <property type="term" value="F:5'-flap endonuclease activity"/>
    <property type="evidence" value="ECO:0007669"/>
    <property type="project" value="UniProtKB-UniRule"/>
</dbReference>
<dbReference type="GO" id="GO:0003677">
    <property type="term" value="F:DNA binding"/>
    <property type="evidence" value="ECO:0007669"/>
    <property type="project" value="UniProtKB-UniRule"/>
</dbReference>
<dbReference type="GO" id="GO:0000287">
    <property type="term" value="F:magnesium ion binding"/>
    <property type="evidence" value="ECO:0007669"/>
    <property type="project" value="UniProtKB-UniRule"/>
</dbReference>
<dbReference type="GO" id="GO:0006281">
    <property type="term" value="P:DNA repair"/>
    <property type="evidence" value="ECO:0007669"/>
    <property type="project" value="UniProtKB-UniRule"/>
</dbReference>
<dbReference type="GO" id="GO:0043137">
    <property type="term" value="P:DNA replication, removal of RNA primer"/>
    <property type="evidence" value="ECO:0007669"/>
    <property type="project" value="UniProtKB-UniRule"/>
</dbReference>
<dbReference type="CDD" id="cd09903">
    <property type="entry name" value="H3TH_FEN1-Arc"/>
    <property type="match status" value="1"/>
</dbReference>
<dbReference type="CDD" id="cd09867">
    <property type="entry name" value="PIN_FEN1"/>
    <property type="match status" value="1"/>
</dbReference>
<dbReference type="FunFam" id="1.10.150.20:FF:000087">
    <property type="entry name" value="Flap endonuclease 1"/>
    <property type="match status" value="1"/>
</dbReference>
<dbReference type="FunFam" id="3.40.50.1010:FF:000016">
    <property type="entry name" value="Flap endonuclease 1"/>
    <property type="match status" value="1"/>
</dbReference>
<dbReference type="Gene3D" id="1.10.150.20">
    <property type="entry name" value="5' to 3' exonuclease, C-terminal subdomain"/>
    <property type="match status" value="1"/>
</dbReference>
<dbReference type="Gene3D" id="3.40.50.1010">
    <property type="entry name" value="5'-nuclease"/>
    <property type="match status" value="1"/>
</dbReference>
<dbReference type="HAMAP" id="MF_00614">
    <property type="entry name" value="Fen"/>
    <property type="match status" value="1"/>
</dbReference>
<dbReference type="InterPro" id="IPR036279">
    <property type="entry name" value="5-3_exonuclease_C_sf"/>
</dbReference>
<dbReference type="InterPro" id="IPR023426">
    <property type="entry name" value="Flap_endonuc"/>
</dbReference>
<dbReference type="InterPro" id="IPR019973">
    <property type="entry name" value="Flap_endonuc_arc"/>
</dbReference>
<dbReference type="InterPro" id="IPR008918">
    <property type="entry name" value="HhH2"/>
</dbReference>
<dbReference type="InterPro" id="IPR029060">
    <property type="entry name" value="PIN-like_dom_sf"/>
</dbReference>
<dbReference type="InterPro" id="IPR006086">
    <property type="entry name" value="XPG-I_dom"/>
</dbReference>
<dbReference type="InterPro" id="IPR006084">
    <property type="entry name" value="XPG/Rad2"/>
</dbReference>
<dbReference type="InterPro" id="IPR006085">
    <property type="entry name" value="XPG_DNA_repair_N"/>
</dbReference>
<dbReference type="NCBIfam" id="TIGR03674">
    <property type="entry name" value="fen_arch"/>
    <property type="match status" value="1"/>
</dbReference>
<dbReference type="PANTHER" id="PTHR11081:SF9">
    <property type="entry name" value="FLAP ENDONUCLEASE 1"/>
    <property type="match status" value="1"/>
</dbReference>
<dbReference type="PANTHER" id="PTHR11081">
    <property type="entry name" value="FLAP ENDONUCLEASE FAMILY MEMBER"/>
    <property type="match status" value="1"/>
</dbReference>
<dbReference type="Pfam" id="PF00867">
    <property type="entry name" value="XPG_I"/>
    <property type="match status" value="1"/>
</dbReference>
<dbReference type="Pfam" id="PF00752">
    <property type="entry name" value="XPG_N"/>
    <property type="match status" value="1"/>
</dbReference>
<dbReference type="PRINTS" id="PR00853">
    <property type="entry name" value="XPGRADSUPER"/>
</dbReference>
<dbReference type="SMART" id="SM00279">
    <property type="entry name" value="HhH2"/>
    <property type="match status" value="1"/>
</dbReference>
<dbReference type="SMART" id="SM00484">
    <property type="entry name" value="XPGI"/>
    <property type="match status" value="1"/>
</dbReference>
<dbReference type="SMART" id="SM00485">
    <property type="entry name" value="XPGN"/>
    <property type="match status" value="1"/>
</dbReference>
<dbReference type="SUPFAM" id="SSF47807">
    <property type="entry name" value="5' to 3' exonuclease, C-terminal subdomain"/>
    <property type="match status" value="1"/>
</dbReference>
<dbReference type="SUPFAM" id="SSF88723">
    <property type="entry name" value="PIN domain-like"/>
    <property type="match status" value="1"/>
</dbReference>
<accession>A2BMI0</accession>
<proteinExistence type="inferred from homology"/>
<protein>
    <recommendedName>
        <fullName evidence="2">Flap endonuclease 1</fullName>
        <shortName evidence="2">FEN-1</shortName>
        <ecNumber evidence="2">3.1.-.-</ecNumber>
    </recommendedName>
    <alternativeName>
        <fullName evidence="2">Flap structure-specific endonuclease 1</fullName>
    </alternativeName>
</protein>
<gene>
    <name evidence="2" type="primary">fen</name>
    <name type="ordered locus">Hbut_1366</name>
</gene>
<comment type="function">
    <text evidence="1">Structure-specific nuclease with 5'-flap endonuclease and 5'-3' exonuclease activities involved in DNA replication and repair. During DNA replication, cleaves the 5'-overhanging flap structure that is generated by displacement synthesis when DNA polymerase encounters the 5'-end of a downstream Okazaki fragment. Binds the unpaired 3'-DNA end and kinks the DNA to facilitate 5' cleavage specificity. Cleaves one nucleotide into the double-stranded DNA from the junction in flap DNA, leaving a nick for ligation. Also involved in the base excision repair (BER) pathway. Acts as a genome stabilization factor that prevents flaps from equilibrating into structures that lead to duplications and deletions. Also possesses 5'-3' exonuclease activity on nicked or gapped double-stranded DNA (By similarity).</text>
</comment>
<comment type="cofactor">
    <cofactor evidence="2">
        <name>Mg(2+)</name>
        <dbReference type="ChEBI" id="CHEBI:18420"/>
    </cofactor>
    <text evidence="2">Binds 2 magnesium ions per subunit. They probably participate in the reaction catalyzed by the enzyme. May bind an additional third magnesium ion after substrate binding.</text>
</comment>
<comment type="subunit">
    <text evidence="2">Interacts with PCNA. PCNA stimulates the nuclease activity without altering cleavage specificity.</text>
</comment>
<comment type="similarity">
    <text evidence="2">Belongs to the XPG/RAD2 endonuclease family. FEN1 subfamily.</text>
</comment>
<reference key="1">
    <citation type="journal article" date="2007" name="Archaea">
        <title>The genome of Hyperthermus butylicus: a sulfur-reducing, peptide fermenting, neutrophilic Crenarchaeote growing up to 108 degrees C.</title>
        <authorList>
            <person name="Bruegger K."/>
            <person name="Chen L."/>
            <person name="Stark M."/>
            <person name="Zibat A."/>
            <person name="Redder P."/>
            <person name="Ruepp A."/>
            <person name="Awayez M."/>
            <person name="She Q."/>
            <person name="Garrett R.A."/>
            <person name="Klenk H.-P."/>
        </authorList>
    </citation>
    <scope>NUCLEOTIDE SEQUENCE [LARGE SCALE GENOMIC DNA]</scope>
    <source>
        <strain>DSM 5456 / JCM 9403 / PLM1-5</strain>
    </source>
</reference>
<keyword id="KW-0227">DNA damage</keyword>
<keyword id="KW-0234">DNA repair</keyword>
<keyword id="KW-0235">DNA replication</keyword>
<keyword id="KW-0255">Endonuclease</keyword>
<keyword id="KW-0269">Exonuclease</keyword>
<keyword id="KW-0378">Hydrolase</keyword>
<keyword id="KW-0460">Magnesium</keyword>
<keyword id="KW-0479">Metal-binding</keyword>
<keyword id="KW-0540">Nuclease</keyword>
<keyword id="KW-1185">Reference proteome</keyword>
<feature type="chain" id="PRO_1000061318" description="Flap endonuclease 1">
    <location>
        <begin position="1"/>
        <end position="350"/>
    </location>
</feature>
<feature type="region of interest" description="N-domain">
    <location>
        <begin position="1"/>
        <end position="101"/>
    </location>
</feature>
<feature type="region of interest" description="I-domain">
    <location>
        <begin position="119"/>
        <end position="261"/>
    </location>
</feature>
<feature type="region of interest" description="Interaction with PCNA" evidence="2">
    <location>
        <begin position="340"/>
        <end position="348"/>
    </location>
</feature>
<feature type="binding site" evidence="2">
    <location>
        <position position="30"/>
    </location>
    <ligand>
        <name>Mg(2+)</name>
        <dbReference type="ChEBI" id="CHEBI:18420"/>
        <label>1</label>
    </ligand>
</feature>
<feature type="binding site" evidence="2">
    <location>
        <position position="83"/>
    </location>
    <ligand>
        <name>Mg(2+)</name>
        <dbReference type="ChEBI" id="CHEBI:18420"/>
        <label>1</label>
    </ligand>
</feature>
<feature type="binding site" evidence="2">
    <location>
        <position position="155"/>
    </location>
    <ligand>
        <name>Mg(2+)</name>
        <dbReference type="ChEBI" id="CHEBI:18420"/>
        <label>1</label>
    </ligand>
</feature>
<feature type="binding site" evidence="2">
    <location>
        <position position="157"/>
    </location>
    <ligand>
        <name>Mg(2+)</name>
        <dbReference type="ChEBI" id="CHEBI:18420"/>
        <label>1</label>
    </ligand>
</feature>
<feature type="binding site" evidence="2">
    <location>
        <position position="176"/>
    </location>
    <ligand>
        <name>Mg(2+)</name>
        <dbReference type="ChEBI" id="CHEBI:18420"/>
        <label>2</label>
    </ligand>
</feature>
<feature type="binding site" evidence="2">
    <location>
        <position position="178"/>
    </location>
    <ligand>
        <name>Mg(2+)</name>
        <dbReference type="ChEBI" id="CHEBI:18420"/>
        <label>2</label>
    </ligand>
</feature>
<feature type="binding site" evidence="2">
    <location>
        <position position="239"/>
    </location>
    <ligand>
        <name>Mg(2+)</name>
        <dbReference type="ChEBI" id="CHEBI:18420"/>
        <label>2</label>
    </ligand>
</feature>
<sequence length="350" mass="40038">MGVNIREVIPPEAIQEIDLAHLKYKVVAIDAYNALYQFLTAIRQPDGTPLMDSKGRITSHLSGLFYRTINLMEHGIKIVYVFDGKPPEMKYLEIERRKRVKSEAVKKYEEAVKKGDTKAARRYAQMAARLTDEMVEDAKKLLDAMGVPWVQAPAEGEAQAAFMARRGDAWAAASQDYDSLLFGSPRLVRNLAITGRRKLPRKDVYVEIKPELIELDKLLKALGITREQLVALGILIGTDYNPDGVKGIGPKTALKMVKAHRDPVKLLQGLPRHEFPTDPLKIYEYFLNPPVTTDYKLEWREPDEKKVFEILVEGHDFSPERVRNALERLKKAYREHFRGQQMGLDAWLRR</sequence>
<evidence type="ECO:0000250" key="1"/>
<evidence type="ECO:0000255" key="2">
    <source>
        <dbReference type="HAMAP-Rule" id="MF_00614"/>
    </source>
</evidence>
<organism>
    <name type="scientific">Hyperthermus butylicus (strain DSM 5456 / JCM 9403 / PLM1-5)</name>
    <dbReference type="NCBI Taxonomy" id="415426"/>
    <lineage>
        <taxon>Archaea</taxon>
        <taxon>Thermoproteota</taxon>
        <taxon>Thermoprotei</taxon>
        <taxon>Desulfurococcales</taxon>
        <taxon>Pyrodictiaceae</taxon>
        <taxon>Hyperthermus</taxon>
    </lineage>
</organism>
<name>FEN_HYPBU</name>